<dbReference type="GO" id="GO:0005576">
    <property type="term" value="C:extracellular region"/>
    <property type="evidence" value="ECO:0007669"/>
    <property type="project" value="UniProtKB-SubCell"/>
</dbReference>
<dbReference type="GO" id="GO:0005344">
    <property type="term" value="F:oxygen carrier activity"/>
    <property type="evidence" value="ECO:0007669"/>
    <property type="project" value="UniProtKB-KW"/>
</dbReference>
<sequence>DQPGDVKTHKQYDVNYLFFKI</sequence>
<comment type="function">
    <text>Hemocyanins are copper-containing oxygen carriers occurring freely dissolved in the hemolymph of many mollusks and arthropods.</text>
</comment>
<comment type="subcellular location">
    <subcellularLocation>
        <location>Secreted</location>
        <location>Extracellular space</location>
    </subcellularLocation>
</comment>
<comment type="tissue specificity">
    <text>Hemolymph.</text>
</comment>
<comment type="similarity">
    <text evidence="1">Belongs to the tyrosinase family. Hemocyanin subfamily.</text>
</comment>
<protein>
    <recommendedName>
        <fullName>Hemocyanin subunit 1</fullName>
    </recommendedName>
</protein>
<proteinExistence type="evidence at protein level"/>
<organism evidence="1">
    <name type="scientific">Maja squinado</name>
    <name type="common">Mediterranean spider crab</name>
    <name type="synonym">Cancer squinado</name>
    <dbReference type="NCBI Taxonomy" id="99391"/>
    <lineage>
        <taxon>Eukaryota</taxon>
        <taxon>Metazoa</taxon>
        <taxon>Ecdysozoa</taxon>
        <taxon>Arthropoda</taxon>
        <taxon>Crustacea</taxon>
        <taxon>Multicrustacea</taxon>
        <taxon>Malacostraca</taxon>
        <taxon>Eumalacostraca</taxon>
        <taxon>Eucarida</taxon>
        <taxon>Decapoda</taxon>
        <taxon>Pleocyemata</taxon>
        <taxon>Brachyura</taxon>
        <taxon>Eubrachyura</taxon>
        <taxon>Majoidea</taxon>
        <taxon>Majidae</taxon>
        <taxon>Maja</taxon>
    </lineage>
</organism>
<keyword id="KW-0186">Copper</keyword>
<keyword id="KW-0903">Direct protein sequencing</keyword>
<keyword id="KW-0561">Oxygen transport</keyword>
<keyword id="KW-0964">Secreted</keyword>
<keyword id="KW-0813">Transport</keyword>
<reference evidence="1" key="1">
    <citation type="journal article" date="1999" name="Comp. Biochem. Physiol.">
        <title>Subunit composition and N-terminal analysis of arthropod hemocyanins.</title>
        <authorList>
            <person name="Stoeva S."/>
            <person name="Dolashka P."/>
            <person name="Hristova R."/>
            <person name="Genov N."/>
            <person name="Voelter W."/>
        </authorList>
    </citation>
    <scope>PROTEIN SEQUENCE</scope>
</reference>
<feature type="chain" id="PRO_0000204282" description="Hemocyanin subunit 1">
    <location>
        <begin position="1"/>
        <end position="21" status="greater than"/>
    </location>
</feature>
<feature type="non-terminal residue" evidence="1">
    <location>
        <position position="21"/>
    </location>
</feature>
<evidence type="ECO:0000305" key="1"/>
<name>HCY1_MAJSQ</name>
<accession>P82302</accession>